<evidence type="ECO:0000256" key="1">
    <source>
        <dbReference type="SAM" id="MobiDB-lite"/>
    </source>
</evidence>
<evidence type="ECO:0000269" key="2">
    <source>
    </source>
</evidence>
<evidence type="ECO:0000305" key="3"/>
<evidence type="ECO:0000305" key="4">
    <source>
    </source>
</evidence>
<evidence type="ECO:0007744" key="5">
    <source>
    </source>
</evidence>
<keyword id="KW-0963">Cytoplasm</keyword>
<keyword id="KW-0560">Oxidoreductase</keyword>
<keyword id="KW-0597">Phosphoprotein</keyword>
<keyword id="KW-1185">Reference proteome</keyword>
<accession>Q9LY15</accession>
<protein>
    <recommendedName>
        <fullName>Peptide methionine sulfoxide reductase A2</fullName>
        <shortName>AtMSRA2</shortName>
        <ecNumber evidence="4">1.8.4.11</ecNumber>
    </recommendedName>
    <alternativeName>
        <fullName>Peptide-methionine (S)-S-oxide reductase</fullName>
        <shortName>Peptide Met(O) reductase</shortName>
    </alternativeName>
    <alternativeName>
        <fullName>Protein-methionine-S-oxide reductase</fullName>
    </alternativeName>
</protein>
<comment type="function">
    <text evidence="2">Catalyzes the reduction of methionine sulfoxide (MetSO) to methionine in proteins. Plays a protective role against oxidative stress by restoring activity to proteins that have been inactivated by methionine oxidation. Prevents cellular oxidative damage in long nights. MSRA family specifically reduces the MetSO S-enantiomer.</text>
</comment>
<comment type="catalytic activity">
    <reaction evidence="4">
        <text>L-methionyl-[protein] + [thioredoxin]-disulfide + H2O = L-methionyl-(S)-S-oxide-[protein] + [thioredoxin]-dithiol</text>
        <dbReference type="Rhea" id="RHEA:14217"/>
        <dbReference type="Rhea" id="RHEA-COMP:10698"/>
        <dbReference type="Rhea" id="RHEA-COMP:10700"/>
        <dbReference type="Rhea" id="RHEA-COMP:12313"/>
        <dbReference type="Rhea" id="RHEA-COMP:12315"/>
        <dbReference type="ChEBI" id="CHEBI:15377"/>
        <dbReference type="ChEBI" id="CHEBI:16044"/>
        <dbReference type="ChEBI" id="CHEBI:29950"/>
        <dbReference type="ChEBI" id="CHEBI:44120"/>
        <dbReference type="ChEBI" id="CHEBI:50058"/>
        <dbReference type="EC" id="1.8.4.11"/>
    </reaction>
</comment>
<comment type="catalytic activity">
    <reaction evidence="4">
        <text>[thioredoxin]-disulfide + L-methionine + H2O = L-methionine (S)-S-oxide + [thioredoxin]-dithiol</text>
        <dbReference type="Rhea" id="RHEA:19993"/>
        <dbReference type="Rhea" id="RHEA-COMP:10698"/>
        <dbReference type="Rhea" id="RHEA-COMP:10700"/>
        <dbReference type="ChEBI" id="CHEBI:15377"/>
        <dbReference type="ChEBI" id="CHEBI:29950"/>
        <dbReference type="ChEBI" id="CHEBI:50058"/>
        <dbReference type="ChEBI" id="CHEBI:57844"/>
        <dbReference type="ChEBI" id="CHEBI:58772"/>
        <dbReference type="EC" id="1.8.4.11"/>
    </reaction>
    <physiologicalReaction direction="right-to-left" evidence="4">
        <dbReference type="Rhea" id="RHEA:19995"/>
    </physiologicalReaction>
</comment>
<comment type="activity regulation">
    <text evidence="2">Activated during dark in short day conditions.</text>
</comment>
<comment type="subcellular location">
    <subcellularLocation>
        <location evidence="3">Cytoplasm</location>
        <location evidence="3">Cytosol</location>
    </subcellularLocation>
</comment>
<comment type="disruption phenotype">
    <text evidence="2">In short day conditions, reduced growth and increased oxidative stress late in the dark period.</text>
</comment>
<comment type="similarity">
    <text evidence="3">Belongs to the MsrA Met sulfoxide reductase family.</text>
</comment>
<feature type="chain" id="PRO_0000395512" description="Peptide methionine sulfoxide reductase A2">
    <location>
        <begin position="1"/>
        <end position="218"/>
    </location>
</feature>
<feature type="region of interest" description="Disordered" evidence="1">
    <location>
        <begin position="1"/>
        <end position="30"/>
    </location>
</feature>
<feature type="compositionally biased region" description="Polar residues" evidence="1">
    <location>
        <begin position="1"/>
        <end position="19"/>
    </location>
</feature>
<feature type="modified residue" description="Phosphoserine" evidence="5">
    <location>
        <position position="205"/>
    </location>
</feature>
<proteinExistence type="evidence at protein level"/>
<reference key="1">
    <citation type="journal article" date="2000" name="Nature">
        <title>Sequence and analysis of chromosome 5 of the plant Arabidopsis thaliana.</title>
        <authorList>
            <person name="Tabata S."/>
            <person name="Kaneko T."/>
            <person name="Nakamura Y."/>
            <person name="Kotani H."/>
            <person name="Kato T."/>
            <person name="Asamizu E."/>
            <person name="Miyajima N."/>
            <person name="Sasamoto S."/>
            <person name="Kimura T."/>
            <person name="Hosouchi T."/>
            <person name="Kawashima K."/>
            <person name="Kohara M."/>
            <person name="Matsumoto M."/>
            <person name="Matsuno A."/>
            <person name="Muraki A."/>
            <person name="Nakayama S."/>
            <person name="Nakazaki N."/>
            <person name="Naruo K."/>
            <person name="Okumura S."/>
            <person name="Shinpo S."/>
            <person name="Takeuchi C."/>
            <person name="Wada T."/>
            <person name="Watanabe A."/>
            <person name="Yamada M."/>
            <person name="Yasuda M."/>
            <person name="Sato S."/>
            <person name="de la Bastide M."/>
            <person name="Huang E."/>
            <person name="Spiegel L."/>
            <person name="Gnoj L."/>
            <person name="O'Shaughnessy A."/>
            <person name="Preston R."/>
            <person name="Habermann K."/>
            <person name="Murray J."/>
            <person name="Johnson D."/>
            <person name="Rohlfing T."/>
            <person name="Nelson J."/>
            <person name="Stoneking T."/>
            <person name="Pepin K."/>
            <person name="Spieth J."/>
            <person name="Sekhon M."/>
            <person name="Armstrong J."/>
            <person name="Becker M."/>
            <person name="Belter E."/>
            <person name="Cordum H."/>
            <person name="Cordes M."/>
            <person name="Courtney L."/>
            <person name="Courtney W."/>
            <person name="Dante M."/>
            <person name="Du H."/>
            <person name="Edwards J."/>
            <person name="Fryman J."/>
            <person name="Haakensen B."/>
            <person name="Lamar E."/>
            <person name="Latreille P."/>
            <person name="Leonard S."/>
            <person name="Meyer R."/>
            <person name="Mulvaney E."/>
            <person name="Ozersky P."/>
            <person name="Riley A."/>
            <person name="Strowmatt C."/>
            <person name="Wagner-McPherson C."/>
            <person name="Wollam A."/>
            <person name="Yoakum M."/>
            <person name="Bell M."/>
            <person name="Dedhia N."/>
            <person name="Parnell L."/>
            <person name="Shah R."/>
            <person name="Rodriguez M."/>
            <person name="Hoon See L."/>
            <person name="Vil D."/>
            <person name="Baker J."/>
            <person name="Kirchoff K."/>
            <person name="Toth K."/>
            <person name="King L."/>
            <person name="Bahret A."/>
            <person name="Miller B."/>
            <person name="Marra M.A."/>
            <person name="Martienssen R."/>
            <person name="McCombie W.R."/>
            <person name="Wilson R.K."/>
            <person name="Murphy G."/>
            <person name="Bancroft I."/>
            <person name="Volckaert G."/>
            <person name="Wambutt R."/>
            <person name="Duesterhoeft A."/>
            <person name="Stiekema W."/>
            <person name="Pohl T."/>
            <person name="Entian K.-D."/>
            <person name="Terryn N."/>
            <person name="Hartley N."/>
            <person name="Bent E."/>
            <person name="Johnson S."/>
            <person name="Langham S.-A."/>
            <person name="McCullagh B."/>
            <person name="Robben J."/>
            <person name="Grymonprez B."/>
            <person name="Zimmermann W."/>
            <person name="Ramsperger U."/>
            <person name="Wedler H."/>
            <person name="Balke K."/>
            <person name="Wedler E."/>
            <person name="Peters S."/>
            <person name="van Staveren M."/>
            <person name="Dirkse W."/>
            <person name="Mooijman P."/>
            <person name="Klein Lankhorst R."/>
            <person name="Weitzenegger T."/>
            <person name="Bothe G."/>
            <person name="Rose M."/>
            <person name="Hauf J."/>
            <person name="Berneiser S."/>
            <person name="Hempel S."/>
            <person name="Feldpausch M."/>
            <person name="Lamberth S."/>
            <person name="Villarroel R."/>
            <person name="Gielen J."/>
            <person name="Ardiles W."/>
            <person name="Bents O."/>
            <person name="Lemcke K."/>
            <person name="Kolesov G."/>
            <person name="Mayer K.F.X."/>
            <person name="Rudd S."/>
            <person name="Schoof H."/>
            <person name="Schueller C."/>
            <person name="Zaccaria P."/>
            <person name="Mewes H.-W."/>
            <person name="Bevan M."/>
            <person name="Fransz P.F."/>
        </authorList>
    </citation>
    <scope>NUCLEOTIDE SEQUENCE [LARGE SCALE GENOMIC DNA]</scope>
    <source>
        <strain>cv. Columbia</strain>
    </source>
</reference>
<reference key="2">
    <citation type="journal article" date="2017" name="Plant J.">
        <title>Araport11: a complete reannotation of the Arabidopsis thaliana reference genome.</title>
        <authorList>
            <person name="Cheng C.Y."/>
            <person name="Krishnakumar V."/>
            <person name="Chan A.P."/>
            <person name="Thibaud-Nissen F."/>
            <person name="Schobel S."/>
            <person name="Town C.D."/>
        </authorList>
    </citation>
    <scope>GENOME REANNOTATION</scope>
    <source>
        <strain>cv. Columbia</strain>
    </source>
</reference>
<reference key="3">
    <citation type="submission" date="2004-04" db="EMBL/GenBank/DDBJ databases">
        <title>Arabidopsis ORF clones.</title>
        <authorList>
            <person name="Shinn P."/>
            <person name="Chen H."/>
            <person name="Cheuk R.F."/>
            <person name="Kim C.J."/>
            <person name="Ecker J.R."/>
        </authorList>
    </citation>
    <scope>NUCLEOTIDE SEQUENCE [LARGE SCALE MRNA]</scope>
    <source>
        <strain>cv. Columbia</strain>
    </source>
</reference>
<reference key="4">
    <citation type="journal article" date="2004" name="Plant Cell">
        <title>Arabidopsis peptide methionine sulfoxide reductase2 prevents cellular oxidative damage in long nights.</title>
        <authorList>
            <person name="Bechtold U."/>
            <person name="Murphy D.J."/>
            <person name="Mullineaux P.M."/>
        </authorList>
    </citation>
    <scope>FUNCTION</scope>
    <scope>CATALYTIC ACTIVITY</scope>
    <scope>ACTIVITY REGULATION</scope>
    <scope>DISRUPTION PHENOTYPE</scope>
</reference>
<reference key="5">
    <citation type="journal article" date="2006" name="Photosyn. Res.">
        <title>Plant methionine sulfoxide reductase A and B multigenic families.</title>
        <authorList>
            <person name="Rouhier N."/>
            <person name="Vieira Dos Santos C."/>
            <person name="Tarrago L."/>
            <person name="Rey P."/>
        </authorList>
    </citation>
    <scope>GENE FAMILY</scope>
    <scope>NOMENCLATURE</scope>
</reference>
<reference key="6">
    <citation type="journal article" date="2008" name="J. Proteome Res.">
        <title>Site-specific phosphorylation profiling of Arabidopsis proteins by mass spectrometry and peptide chip analysis.</title>
        <authorList>
            <person name="de la Fuente van Bentem S."/>
            <person name="Anrather D."/>
            <person name="Dohnal I."/>
            <person name="Roitinger E."/>
            <person name="Csaszar E."/>
            <person name="Joore J."/>
            <person name="Buijnink J."/>
            <person name="Carreri A."/>
            <person name="Forzani C."/>
            <person name="Lorkovic Z.J."/>
            <person name="Barta A."/>
            <person name="Lecourieux D."/>
            <person name="Verhounig A."/>
            <person name="Jonak C."/>
            <person name="Hirt H."/>
        </authorList>
    </citation>
    <scope>PHOSPHORYLATION [LARGE SCALE ANALYSIS] AT SER-205</scope>
    <scope>IDENTIFICATION BY MASS SPECTROMETRY [LARGE SCALE ANALYSIS]</scope>
    <source>
        <tissue>Root</tissue>
    </source>
</reference>
<dbReference type="EC" id="1.8.4.11" evidence="4"/>
<dbReference type="EMBL" id="AL163912">
    <property type="protein sequence ID" value="CAB87935.1"/>
    <property type="molecule type" value="Genomic_DNA"/>
</dbReference>
<dbReference type="EMBL" id="CP002688">
    <property type="protein sequence ID" value="AED91161.1"/>
    <property type="molecule type" value="Genomic_DNA"/>
</dbReference>
<dbReference type="EMBL" id="BT010708">
    <property type="protein sequence ID" value="AAR20765.1"/>
    <property type="molecule type" value="mRNA"/>
</dbReference>
<dbReference type="EMBL" id="BT012426">
    <property type="protein sequence ID" value="AAS92342.1"/>
    <property type="molecule type" value="mRNA"/>
</dbReference>
<dbReference type="PIR" id="T49885">
    <property type="entry name" value="T49885"/>
</dbReference>
<dbReference type="RefSeq" id="NP_196363.1">
    <property type="nucleotide sequence ID" value="NM_120828.4"/>
</dbReference>
<dbReference type="SMR" id="Q9LY15"/>
<dbReference type="FunCoup" id="Q9LY15">
    <property type="interactions" value="1614"/>
</dbReference>
<dbReference type="IntAct" id="Q9LY15">
    <property type="interactions" value="1"/>
</dbReference>
<dbReference type="STRING" id="3702.Q9LY15"/>
<dbReference type="iPTMnet" id="Q9LY15"/>
<dbReference type="MetOSite" id="Q9LY15"/>
<dbReference type="PaxDb" id="3702-AT5G07460.1"/>
<dbReference type="ProteomicsDB" id="250790"/>
<dbReference type="EnsemblPlants" id="AT5G07460.1">
    <property type="protein sequence ID" value="AT5G07460.1"/>
    <property type="gene ID" value="AT5G07460"/>
</dbReference>
<dbReference type="GeneID" id="830637"/>
<dbReference type="Gramene" id="AT5G07460.1">
    <property type="protein sequence ID" value="AT5G07460.1"/>
    <property type="gene ID" value="AT5G07460"/>
</dbReference>
<dbReference type="KEGG" id="ath:AT5G07460"/>
<dbReference type="Araport" id="AT5G07460"/>
<dbReference type="TAIR" id="AT5G07460">
    <property type="gene designation" value="PMSR2"/>
</dbReference>
<dbReference type="eggNOG" id="KOG1635">
    <property type="taxonomic scope" value="Eukaryota"/>
</dbReference>
<dbReference type="HOGENOM" id="CLU_031040_3_0_1"/>
<dbReference type="InParanoid" id="Q9LY15"/>
<dbReference type="OMA" id="FWGAEKC"/>
<dbReference type="OrthoDB" id="77405at2759"/>
<dbReference type="PhylomeDB" id="Q9LY15"/>
<dbReference type="PRO" id="PR:Q9LY15"/>
<dbReference type="Proteomes" id="UP000006548">
    <property type="component" value="Chromosome 5"/>
</dbReference>
<dbReference type="ExpressionAtlas" id="Q9LY15">
    <property type="expression patterns" value="baseline and differential"/>
</dbReference>
<dbReference type="GO" id="GO:0005829">
    <property type="term" value="C:cytosol"/>
    <property type="evidence" value="ECO:0007669"/>
    <property type="project" value="UniProtKB-SubCell"/>
</dbReference>
<dbReference type="GO" id="GO:0005886">
    <property type="term" value="C:plasma membrane"/>
    <property type="evidence" value="ECO:0007005"/>
    <property type="project" value="TAIR"/>
</dbReference>
<dbReference type="GO" id="GO:0033744">
    <property type="term" value="F:L-methionine:thioredoxin-disulfide S-oxidoreductase activity"/>
    <property type="evidence" value="ECO:0000315"/>
    <property type="project" value="UniProtKB"/>
</dbReference>
<dbReference type="GO" id="GO:0008113">
    <property type="term" value="F:peptide-methionine (S)-S-oxide reductase activity"/>
    <property type="evidence" value="ECO:0000315"/>
    <property type="project" value="TAIR"/>
</dbReference>
<dbReference type="GO" id="GO:0034599">
    <property type="term" value="P:cellular response to oxidative stress"/>
    <property type="evidence" value="ECO:0000315"/>
    <property type="project" value="UniProtKB"/>
</dbReference>
<dbReference type="GO" id="GO:0006979">
    <property type="term" value="P:response to oxidative stress"/>
    <property type="evidence" value="ECO:0000315"/>
    <property type="project" value="TAIR"/>
</dbReference>
<dbReference type="FunFam" id="3.30.1060.10:FF:000002">
    <property type="entry name" value="Peptide methionine sulfoxide reductase"/>
    <property type="match status" value="1"/>
</dbReference>
<dbReference type="Gene3D" id="3.30.1060.10">
    <property type="entry name" value="Peptide methionine sulphoxide reductase MsrA"/>
    <property type="match status" value="1"/>
</dbReference>
<dbReference type="HAMAP" id="MF_01401">
    <property type="entry name" value="MsrA"/>
    <property type="match status" value="1"/>
</dbReference>
<dbReference type="InterPro" id="IPR002569">
    <property type="entry name" value="Met_Sox_Rdtase_MsrA_dom"/>
</dbReference>
<dbReference type="InterPro" id="IPR036509">
    <property type="entry name" value="Met_Sox_Rdtase_MsrA_sf"/>
</dbReference>
<dbReference type="InterPro" id="IPR050162">
    <property type="entry name" value="MsrA_MetSO_reductase"/>
</dbReference>
<dbReference type="NCBIfam" id="TIGR00401">
    <property type="entry name" value="msrA"/>
    <property type="match status" value="1"/>
</dbReference>
<dbReference type="PANTHER" id="PTHR42799">
    <property type="entry name" value="MITOCHONDRIAL PEPTIDE METHIONINE SULFOXIDE REDUCTASE"/>
    <property type="match status" value="1"/>
</dbReference>
<dbReference type="PANTHER" id="PTHR42799:SF16">
    <property type="entry name" value="PEPTIDE METHIONINE SULFOXIDE REDUCTASE A2"/>
    <property type="match status" value="1"/>
</dbReference>
<dbReference type="Pfam" id="PF01625">
    <property type="entry name" value="PMSR"/>
    <property type="match status" value="1"/>
</dbReference>
<dbReference type="SUPFAM" id="SSF55068">
    <property type="entry name" value="Peptide methionine sulfoxide reductase"/>
    <property type="match status" value="1"/>
</dbReference>
<gene>
    <name type="primary">MRSA2</name>
    <name type="synonym">PMSR2</name>
    <name type="ordered locus">At5g07460</name>
    <name type="ORF">T2I1.170</name>
</gene>
<organism>
    <name type="scientific">Arabidopsis thaliana</name>
    <name type="common">Mouse-ear cress</name>
    <dbReference type="NCBI Taxonomy" id="3702"/>
    <lineage>
        <taxon>Eukaryota</taxon>
        <taxon>Viridiplantae</taxon>
        <taxon>Streptophyta</taxon>
        <taxon>Embryophyta</taxon>
        <taxon>Tracheophyta</taxon>
        <taxon>Spermatophyta</taxon>
        <taxon>Magnoliopsida</taxon>
        <taxon>eudicotyledons</taxon>
        <taxon>Gunneridae</taxon>
        <taxon>Pentapetalae</taxon>
        <taxon>rosids</taxon>
        <taxon>malvids</taxon>
        <taxon>Brassicales</taxon>
        <taxon>Brassicaceae</taxon>
        <taxon>Camelineae</taxon>
        <taxon>Arabidopsis</taxon>
    </lineage>
</organism>
<name>MSRA2_ARATH</name>
<sequence>MDSSLKTQEPQVVETSPSPVAQEPPQVADKPAIVPSPIAQEPDNDVPAPGNEFAEFAAGCFWGVELAFQRIPGVTVTEVGYTHGISHNPSYEDVCTNTTNHAEVVRVQYDPKECTYETLLDLFWSRHNPTTLNRQGELLGAQYRSGIYFYTPEQEKLARESLEKEQKKLEDKIVTEILPAKKFYKAEEYHQQYLVKGGMHGNAQSPAKSCKDPIRCYG</sequence>